<name>BETA_STAAN</name>
<accession>P60337</accession>
<accession>Q99R25</accession>
<proteinExistence type="evidence at protein level"/>
<dbReference type="EC" id="1.1.99.1" evidence="1"/>
<dbReference type="EC" id="1.2.1.8" evidence="1"/>
<dbReference type="EMBL" id="BA000018">
    <property type="protein sequence ID" value="BAB43710.1"/>
    <property type="molecule type" value="Genomic_DNA"/>
</dbReference>
<dbReference type="PIR" id="D90068">
    <property type="entry name" value="D90068"/>
</dbReference>
<dbReference type="RefSeq" id="WP_000066521.1">
    <property type="nucleotide sequence ID" value="NC_002745.2"/>
</dbReference>
<dbReference type="SMR" id="P60337"/>
<dbReference type="CAZy" id="AA3">
    <property type="family name" value="Auxiliary Activities 3"/>
</dbReference>
<dbReference type="EnsemblBacteria" id="BAB43710">
    <property type="protein sequence ID" value="BAB43710"/>
    <property type="gene ID" value="BAB43710"/>
</dbReference>
<dbReference type="KEGG" id="sau:SA2405"/>
<dbReference type="HOGENOM" id="CLU_002865_7_1_9"/>
<dbReference type="UniPathway" id="UPA00529">
    <property type="reaction ID" value="UER00385"/>
</dbReference>
<dbReference type="GO" id="GO:0016020">
    <property type="term" value="C:membrane"/>
    <property type="evidence" value="ECO:0007669"/>
    <property type="project" value="TreeGrafter"/>
</dbReference>
<dbReference type="GO" id="GO:0008802">
    <property type="term" value="F:betaine-aldehyde dehydrogenase (NAD+) activity"/>
    <property type="evidence" value="ECO:0007669"/>
    <property type="project" value="UniProtKB-EC"/>
</dbReference>
<dbReference type="GO" id="GO:0008812">
    <property type="term" value="F:choline dehydrogenase activity"/>
    <property type="evidence" value="ECO:0007669"/>
    <property type="project" value="UniProtKB-UniRule"/>
</dbReference>
<dbReference type="GO" id="GO:0050660">
    <property type="term" value="F:flavin adenine dinucleotide binding"/>
    <property type="evidence" value="ECO:0007669"/>
    <property type="project" value="InterPro"/>
</dbReference>
<dbReference type="GO" id="GO:0019285">
    <property type="term" value="P:glycine betaine biosynthetic process from choline"/>
    <property type="evidence" value="ECO:0007669"/>
    <property type="project" value="UniProtKB-UniRule"/>
</dbReference>
<dbReference type="Gene3D" id="3.50.50.60">
    <property type="entry name" value="FAD/NAD(P)-binding domain"/>
    <property type="match status" value="1"/>
</dbReference>
<dbReference type="Gene3D" id="3.30.560.10">
    <property type="entry name" value="Glucose Oxidase, domain 3"/>
    <property type="match status" value="1"/>
</dbReference>
<dbReference type="HAMAP" id="MF_00750">
    <property type="entry name" value="Choline_dehydrogen"/>
    <property type="match status" value="1"/>
</dbReference>
<dbReference type="InterPro" id="IPR011533">
    <property type="entry name" value="BetA"/>
</dbReference>
<dbReference type="InterPro" id="IPR036188">
    <property type="entry name" value="FAD/NAD-bd_sf"/>
</dbReference>
<dbReference type="InterPro" id="IPR012132">
    <property type="entry name" value="GMC_OxRdtase"/>
</dbReference>
<dbReference type="InterPro" id="IPR000172">
    <property type="entry name" value="GMC_OxRdtase_N"/>
</dbReference>
<dbReference type="InterPro" id="IPR007867">
    <property type="entry name" value="GMC_OxRtase_C"/>
</dbReference>
<dbReference type="NCBIfam" id="TIGR01810">
    <property type="entry name" value="betA"/>
    <property type="match status" value="1"/>
</dbReference>
<dbReference type="NCBIfam" id="NF002550">
    <property type="entry name" value="PRK02106.1"/>
    <property type="match status" value="1"/>
</dbReference>
<dbReference type="PANTHER" id="PTHR11552:SF147">
    <property type="entry name" value="CHOLINE DEHYDROGENASE, MITOCHONDRIAL"/>
    <property type="match status" value="1"/>
</dbReference>
<dbReference type="PANTHER" id="PTHR11552">
    <property type="entry name" value="GLUCOSE-METHANOL-CHOLINE GMC OXIDOREDUCTASE"/>
    <property type="match status" value="1"/>
</dbReference>
<dbReference type="Pfam" id="PF05199">
    <property type="entry name" value="GMC_oxred_C"/>
    <property type="match status" value="1"/>
</dbReference>
<dbReference type="Pfam" id="PF00732">
    <property type="entry name" value="GMC_oxred_N"/>
    <property type="match status" value="1"/>
</dbReference>
<dbReference type="PIRSF" id="PIRSF000137">
    <property type="entry name" value="Alcohol_oxidase"/>
    <property type="match status" value="1"/>
</dbReference>
<dbReference type="SUPFAM" id="SSF54373">
    <property type="entry name" value="FAD-linked reductases, C-terminal domain"/>
    <property type="match status" value="1"/>
</dbReference>
<dbReference type="SUPFAM" id="SSF51905">
    <property type="entry name" value="FAD/NAD(P)-binding domain"/>
    <property type="match status" value="1"/>
</dbReference>
<dbReference type="PROSITE" id="PS00623">
    <property type="entry name" value="GMC_OXRED_1"/>
    <property type="match status" value="1"/>
</dbReference>
<dbReference type="PROSITE" id="PS00624">
    <property type="entry name" value="GMC_OXRED_2"/>
    <property type="match status" value="1"/>
</dbReference>
<organism>
    <name type="scientific">Staphylococcus aureus (strain N315)</name>
    <dbReference type="NCBI Taxonomy" id="158879"/>
    <lineage>
        <taxon>Bacteria</taxon>
        <taxon>Bacillati</taxon>
        <taxon>Bacillota</taxon>
        <taxon>Bacilli</taxon>
        <taxon>Bacillales</taxon>
        <taxon>Staphylococcaceae</taxon>
        <taxon>Staphylococcus</taxon>
    </lineage>
</organism>
<gene>
    <name evidence="1" type="primary">betA</name>
    <name type="ordered locus">SA2405</name>
</gene>
<keyword id="KW-0274">FAD</keyword>
<keyword id="KW-0285">Flavoprotein</keyword>
<keyword id="KW-0520">NAD</keyword>
<keyword id="KW-0560">Oxidoreductase</keyword>
<comment type="function">
    <text evidence="1">Involved in the biosynthesis of the osmoprotectant glycine betaine. Catalyzes the oxidation of choline to betaine aldehyde and betaine aldehyde to glycine betaine at the same rate.</text>
</comment>
<comment type="catalytic activity">
    <reaction evidence="1">
        <text>choline + A = betaine aldehyde + AH2</text>
        <dbReference type="Rhea" id="RHEA:17433"/>
        <dbReference type="ChEBI" id="CHEBI:13193"/>
        <dbReference type="ChEBI" id="CHEBI:15354"/>
        <dbReference type="ChEBI" id="CHEBI:15710"/>
        <dbReference type="ChEBI" id="CHEBI:17499"/>
        <dbReference type="EC" id="1.1.99.1"/>
    </reaction>
</comment>
<comment type="catalytic activity">
    <reaction evidence="1">
        <text>betaine aldehyde + NAD(+) + H2O = glycine betaine + NADH + 2 H(+)</text>
        <dbReference type="Rhea" id="RHEA:15305"/>
        <dbReference type="ChEBI" id="CHEBI:15377"/>
        <dbReference type="ChEBI" id="CHEBI:15378"/>
        <dbReference type="ChEBI" id="CHEBI:15710"/>
        <dbReference type="ChEBI" id="CHEBI:17750"/>
        <dbReference type="ChEBI" id="CHEBI:57540"/>
        <dbReference type="ChEBI" id="CHEBI:57945"/>
        <dbReference type="EC" id="1.2.1.8"/>
    </reaction>
</comment>
<comment type="cofactor">
    <cofactor evidence="1">
        <name>FAD</name>
        <dbReference type="ChEBI" id="CHEBI:57692"/>
    </cofactor>
</comment>
<comment type="pathway">
    <text evidence="1">Amine and polyamine biosynthesis; betaine biosynthesis via choline pathway; betaine aldehyde from choline (cytochrome c reductase route): step 1/1.</text>
</comment>
<comment type="similarity">
    <text evidence="1">Belongs to the GMC oxidoreductase family.</text>
</comment>
<sequence>MSNKNKSYDYVIIGGGSAGSVLGNRLSEDKDKEVLVLEAGRSDYFWDLFIQMPAALMFPSGNKFYDWIYSTDEEPHMGGRKVAHARGKVLGGSSSINGMIYQRGNPMDYEGWAEPEGMETWDFAHCLPYFKKLEKTYGAAPYDKFRGHDGPIKLKRGPATNPLFQSFFDAGVEAGYHKTPDVNGFRQEGFGPFDSQVHRGRRMSASRAYLHPAMKRKNLTVETRAFVTEIHYEGRRATGVTYKKNGKLHTIDANEVILSGGAFNTPQLLQLSGIGDSEFLKSKGIEPRVHLPGVGENFEDHLEVYIQHKCKEPVSLQPSLDIKRMPFIGLQWIFTRTGAAASNHFEGGGFVRSNNEVDYPNLMFHFLPIAVRYDGQKAAVAHGYQVHVGPMYSNSRGSLKIKSKDPFEKPSIRFNYLSTEEDKKEWVEAIRVARNILSQKAMDPFNGGEISPGPEVQTDEEILDWVRRDGETALHPSCSAKMGPASDPMAVVDPLTMKVHGMENLRVVDASAMPRTTNGNIHAPVLMLAEKAADIIRGRKPLEPQYIDYYKHGVHDENEGAIEVKPYAK</sequence>
<protein>
    <recommendedName>
        <fullName evidence="1">Oxygen-dependent choline dehydrogenase</fullName>
        <shortName evidence="1">CDH</shortName>
        <shortName evidence="1">CHD</shortName>
        <ecNumber evidence="1">1.1.99.1</ecNumber>
    </recommendedName>
    <alternativeName>
        <fullName evidence="1">Betaine aldehyde dehydrogenase</fullName>
        <shortName evidence="1">BADH</shortName>
        <ecNumber evidence="1">1.2.1.8</ecNumber>
    </alternativeName>
</protein>
<evidence type="ECO:0000255" key="1">
    <source>
        <dbReference type="HAMAP-Rule" id="MF_00750"/>
    </source>
</evidence>
<feature type="chain" id="PRO_0000205597" description="Oxygen-dependent choline dehydrogenase">
    <location>
        <begin position="1"/>
        <end position="569"/>
    </location>
</feature>
<feature type="active site" description="Proton acceptor" evidence="1">
    <location>
        <position position="475"/>
    </location>
</feature>
<feature type="binding site" evidence="1">
    <location>
        <begin position="9"/>
        <end position="38"/>
    </location>
    <ligand>
        <name>FAD</name>
        <dbReference type="ChEBI" id="CHEBI:57692"/>
    </ligand>
</feature>
<reference key="1">
    <citation type="journal article" date="2001" name="Lancet">
        <title>Whole genome sequencing of meticillin-resistant Staphylococcus aureus.</title>
        <authorList>
            <person name="Kuroda M."/>
            <person name="Ohta T."/>
            <person name="Uchiyama I."/>
            <person name="Baba T."/>
            <person name="Yuzawa H."/>
            <person name="Kobayashi I."/>
            <person name="Cui L."/>
            <person name="Oguchi A."/>
            <person name="Aoki K."/>
            <person name="Nagai Y."/>
            <person name="Lian J.-Q."/>
            <person name="Ito T."/>
            <person name="Kanamori M."/>
            <person name="Matsumaru H."/>
            <person name="Maruyama A."/>
            <person name="Murakami H."/>
            <person name="Hosoyama A."/>
            <person name="Mizutani-Ui Y."/>
            <person name="Takahashi N.K."/>
            <person name="Sawano T."/>
            <person name="Inoue R."/>
            <person name="Kaito C."/>
            <person name="Sekimizu K."/>
            <person name="Hirakawa H."/>
            <person name="Kuhara S."/>
            <person name="Goto S."/>
            <person name="Yabuzaki J."/>
            <person name="Kanehisa M."/>
            <person name="Yamashita A."/>
            <person name="Oshima K."/>
            <person name="Furuya K."/>
            <person name="Yoshino C."/>
            <person name="Shiba T."/>
            <person name="Hattori M."/>
            <person name="Ogasawara N."/>
            <person name="Hayashi H."/>
            <person name="Hiramatsu K."/>
        </authorList>
    </citation>
    <scope>NUCLEOTIDE SEQUENCE [LARGE SCALE GENOMIC DNA]</scope>
    <source>
        <strain>N315</strain>
    </source>
</reference>
<reference key="2">
    <citation type="submission" date="2007-10" db="UniProtKB">
        <title>Shotgun proteomic analysis of total and membrane protein extracts of S. aureus strain N315.</title>
        <authorList>
            <person name="Vaezzadeh A.R."/>
            <person name="Deshusses J."/>
            <person name="Lescuyer P."/>
            <person name="Hochstrasser D.F."/>
        </authorList>
    </citation>
    <scope>IDENTIFICATION BY MASS SPECTROMETRY [LARGE SCALE ANALYSIS]</scope>
    <source>
        <strain>N315</strain>
    </source>
</reference>